<dbReference type="EMBL" id="S60738">
    <property type="protein sequence ID" value="AAC60499.1"/>
    <property type="molecule type" value="mRNA"/>
</dbReference>
<dbReference type="EMBL" id="S60782">
    <property type="protein sequence ID" value="AAC60497.1"/>
    <property type="molecule type" value="Genomic_DNA"/>
</dbReference>
<dbReference type="EMBL" id="U73683">
    <property type="protein sequence ID" value="AAC35424.1"/>
    <property type="molecule type" value="mRNA"/>
</dbReference>
<dbReference type="PIR" id="A56591">
    <property type="entry name" value="A56591"/>
</dbReference>
<dbReference type="PIR" id="C56591">
    <property type="entry name" value="C56591"/>
</dbReference>
<dbReference type="SMR" id="Q08893"/>
<dbReference type="EnsemblMetazoa" id="XM_030183441.2">
    <molecule id="Q08893-1"/>
    <property type="protein sequence ID" value="XP_030039301.1"/>
    <property type="gene ID" value="LOC115454708"/>
</dbReference>
<dbReference type="OrthoDB" id="7634782at2759"/>
<dbReference type="GO" id="GO:0005634">
    <property type="term" value="C:nucleus"/>
    <property type="evidence" value="ECO:0007669"/>
    <property type="project" value="UniProtKB-SubCell"/>
</dbReference>
<dbReference type="GO" id="GO:0004879">
    <property type="term" value="F:nuclear receptor activity"/>
    <property type="evidence" value="ECO:0007669"/>
    <property type="project" value="InterPro"/>
</dbReference>
<dbReference type="GO" id="GO:0000978">
    <property type="term" value="F:RNA polymerase II cis-regulatory region sequence-specific DNA binding"/>
    <property type="evidence" value="ECO:0007669"/>
    <property type="project" value="TreeGrafter"/>
</dbReference>
<dbReference type="GO" id="GO:0008270">
    <property type="term" value="F:zinc ion binding"/>
    <property type="evidence" value="ECO:0007669"/>
    <property type="project" value="UniProtKB-KW"/>
</dbReference>
<dbReference type="GO" id="GO:0030154">
    <property type="term" value="P:cell differentiation"/>
    <property type="evidence" value="ECO:0007669"/>
    <property type="project" value="TreeGrafter"/>
</dbReference>
<dbReference type="GO" id="GO:0009755">
    <property type="term" value="P:hormone-mediated signaling pathway"/>
    <property type="evidence" value="ECO:0007669"/>
    <property type="project" value="TreeGrafter"/>
</dbReference>
<dbReference type="GO" id="GO:0000122">
    <property type="term" value="P:negative regulation of transcription by RNA polymerase II"/>
    <property type="evidence" value="ECO:0007669"/>
    <property type="project" value="TreeGrafter"/>
</dbReference>
<dbReference type="GO" id="GO:0045944">
    <property type="term" value="P:positive regulation of transcription by RNA polymerase II"/>
    <property type="evidence" value="ECO:0007669"/>
    <property type="project" value="TreeGrafter"/>
</dbReference>
<dbReference type="CDD" id="cd07166">
    <property type="entry name" value="NR_DBD_REV_ERB"/>
    <property type="match status" value="1"/>
</dbReference>
<dbReference type="FunFam" id="1.10.565.10:FF:000029">
    <property type="entry name" value="Ecdysone-induced protein 75B, isoform B"/>
    <property type="match status" value="1"/>
</dbReference>
<dbReference type="FunFam" id="3.30.50.10:FF:000013">
    <property type="entry name" value="Nuclear receptor subfamily 1 group D member 2"/>
    <property type="match status" value="1"/>
</dbReference>
<dbReference type="Gene3D" id="3.30.50.10">
    <property type="entry name" value="Erythroid Transcription Factor GATA-1, subunit A"/>
    <property type="match status" value="1"/>
</dbReference>
<dbReference type="Gene3D" id="1.10.565.10">
    <property type="entry name" value="Retinoid X Receptor"/>
    <property type="match status" value="1"/>
</dbReference>
<dbReference type="InterPro" id="IPR035500">
    <property type="entry name" value="NHR-like_dom_sf"/>
</dbReference>
<dbReference type="InterPro" id="IPR000536">
    <property type="entry name" value="Nucl_hrmn_rcpt_lig-bd"/>
</dbReference>
<dbReference type="InterPro" id="IPR050234">
    <property type="entry name" value="Nuclear_hormone_rcpt_NR1"/>
</dbReference>
<dbReference type="InterPro" id="IPR001723">
    <property type="entry name" value="Nuclear_hrmn_rcpt"/>
</dbReference>
<dbReference type="InterPro" id="IPR001728">
    <property type="entry name" value="ThyrH_rcpt"/>
</dbReference>
<dbReference type="InterPro" id="IPR001628">
    <property type="entry name" value="Znf_hrmn_rcpt"/>
</dbReference>
<dbReference type="InterPro" id="IPR013088">
    <property type="entry name" value="Znf_NHR/GATA"/>
</dbReference>
<dbReference type="PANTHER" id="PTHR24082:SF473">
    <property type="entry name" value="ECDYSONE-INDUCED PROTEIN 75B, ISOFORM B"/>
    <property type="match status" value="1"/>
</dbReference>
<dbReference type="PANTHER" id="PTHR24082">
    <property type="entry name" value="NUCLEAR HORMONE RECEPTOR"/>
    <property type="match status" value="1"/>
</dbReference>
<dbReference type="Pfam" id="PF00104">
    <property type="entry name" value="Hormone_recep"/>
    <property type="match status" value="1"/>
</dbReference>
<dbReference type="Pfam" id="PF00105">
    <property type="entry name" value="zf-C4"/>
    <property type="match status" value="1"/>
</dbReference>
<dbReference type="PRINTS" id="PR00398">
    <property type="entry name" value="STRDHORMONER"/>
</dbReference>
<dbReference type="PRINTS" id="PR00047">
    <property type="entry name" value="STROIDFINGER"/>
</dbReference>
<dbReference type="PRINTS" id="PR00546">
    <property type="entry name" value="THYROIDHORMR"/>
</dbReference>
<dbReference type="SMART" id="SM00430">
    <property type="entry name" value="HOLI"/>
    <property type="match status" value="1"/>
</dbReference>
<dbReference type="SMART" id="SM00399">
    <property type="entry name" value="ZnF_C4"/>
    <property type="match status" value="1"/>
</dbReference>
<dbReference type="SUPFAM" id="SSF57716">
    <property type="entry name" value="Glucocorticoid receptor-like (DNA-binding domain)"/>
    <property type="match status" value="1"/>
</dbReference>
<dbReference type="SUPFAM" id="SSF48508">
    <property type="entry name" value="Nuclear receptor ligand-binding domain"/>
    <property type="match status" value="1"/>
</dbReference>
<dbReference type="PROSITE" id="PS51843">
    <property type="entry name" value="NR_LBD"/>
    <property type="match status" value="1"/>
</dbReference>
<dbReference type="PROSITE" id="PS00031">
    <property type="entry name" value="NUCLEAR_REC_DBD_1"/>
    <property type="match status" value="1"/>
</dbReference>
<dbReference type="PROSITE" id="PS51030">
    <property type="entry name" value="NUCLEAR_REC_DBD_2"/>
    <property type="match status" value="1"/>
</dbReference>
<name>E75_MANSE</name>
<feature type="chain" id="PRO_0000053509" description="Ecdysone-inducible protein E75">
    <location>
        <begin position="1"/>
        <end position="699"/>
    </location>
</feature>
<feature type="domain" description="NR LBD" evidence="2">
    <location>
        <begin position="152"/>
        <end position="399"/>
    </location>
</feature>
<feature type="DNA-binding region" description="Nuclear receptor" evidence="1">
    <location>
        <begin position="42"/>
        <end position="118"/>
    </location>
</feature>
<feature type="zinc finger region" description="NR C4-type" evidence="1">
    <location>
        <begin position="45"/>
        <end position="65"/>
    </location>
</feature>
<feature type="zinc finger region" description="NR C4-type" evidence="1">
    <location>
        <begin position="82"/>
        <end position="106"/>
    </location>
</feature>
<feature type="region of interest" description="Disordered" evidence="3">
    <location>
        <begin position="1"/>
        <end position="31"/>
    </location>
</feature>
<feature type="region of interest" description="Disordered" evidence="3">
    <location>
        <begin position="466"/>
        <end position="528"/>
    </location>
</feature>
<feature type="region of interest" description="Disordered" evidence="3">
    <location>
        <begin position="561"/>
        <end position="607"/>
    </location>
</feature>
<feature type="region of interest" description="Disordered" evidence="3">
    <location>
        <begin position="679"/>
        <end position="699"/>
    </location>
</feature>
<feature type="compositionally biased region" description="Basic and acidic residues" evidence="3">
    <location>
        <begin position="510"/>
        <end position="520"/>
    </location>
</feature>
<feature type="compositionally biased region" description="Basic and acidic residues" evidence="3">
    <location>
        <begin position="561"/>
        <end position="571"/>
    </location>
</feature>
<feature type="compositionally biased region" description="Pro residues" evidence="3">
    <location>
        <begin position="575"/>
        <end position="588"/>
    </location>
</feature>
<feature type="splice variant" id="VSP_003653" description="In isoform 2." evidence="4">
    <original>MTLVMSPDSSYGRYDAPTPTDVTSPVHREREPELHIEFDGTTVLCRVCGDKASGFHYGVHSCEGCK</original>
    <variation>MVRAMSCGAELRERHSVLVSMLEARRESSDSGCSSDDGSDVERDCKCRCDPQ</variation>
    <location>
        <begin position="1"/>
        <end position="66"/>
    </location>
</feature>
<gene>
    <name type="primary">E75</name>
    <name type="synonym">NR1D3</name>
</gene>
<keyword id="KW-0025">Alternative splicing</keyword>
<keyword id="KW-0238">DNA-binding</keyword>
<keyword id="KW-0479">Metal-binding</keyword>
<keyword id="KW-0539">Nucleus</keyword>
<keyword id="KW-0675">Receptor</keyword>
<keyword id="KW-0804">Transcription</keyword>
<keyword id="KW-0805">Transcription regulation</keyword>
<keyword id="KW-0862">Zinc</keyword>
<keyword id="KW-0863">Zinc-finger</keyword>
<sequence>MTLVMSPDSSYGRYDAPTPTDVTSPVHREREPELHIEFDGTTVLCRVCGDKASGFHYGVHSCEGCKGFFRRSIQQKIQYRPCTKNQQCSILRINRNRCQYCRLKKCIAVGMSRDAVRFGRVPKREKARILAAMQQSSTSRAHEQAAAAELDDAPRLLARVVRAHLDTCEFTRDRVAAMRARARDCPTYSQPTLACPLNPAPELQSEKEFSQRFAHVIRGVIDFAGLIPGFQLLTQDDKFTLLKSGLFDALFVRLICMFDAPLNSIICLNGQLMKRDSIQSGANARFLVDSTFKFAERMNSMNLTDAEIGLFCAIVLITPDRPGLRNVELVERMHTRLKACLQTVIAQNRPDRPGFLRELMDTLPDLRTLSTLHTEKLVVFRTEHKELLRQQMWSEEEAVSWVDSGADELARSPIGSVSSSESGEAVGDCGTPLLAATLAGRRRLDSRGSVDEEALGVAHLAHNGLTVTPVRQPPRYRKLDSPTDSGIESGNEKHERIVGTGSGCSSPRSSLEEHNEDRRPPVSADDMPVLKRVLQAPPLYGGTPSLMDEAYRRHKKFRALRRDTGEAEARTVRPTPSPQPQHPHPANPAHPAHSPRPQRASLSSTHSVLAKSLMEGPRMTPEQLKRTDIIQQYMRRGESSAPAEGCPLRAGGLLTCYRGASPAPQPVLALQVDVTDAPLNLSKKSPSPPRTYMPQMLEA</sequence>
<accession>Q08893</accession>
<accession>Q08892</accession>
<comment type="function">
    <text>Implicated in the regulation of ecdysone-triggered gene hierarchies. Probably plays a key role in mediating the regulation of the larval molt by 20-OH-ecdysone.</text>
</comment>
<comment type="subcellular location">
    <subcellularLocation>
        <location evidence="1">Nucleus</location>
    </subcellularLocation>
</comment>
<comment type="alternative products">
    <event type="alternative splicing"/>
    <isoform>
        <id>Q08893-1</id>
        <name>1</name>
        <name>E75A</name>
        <sequence type="displayed"/>
    </isoform>
    <isoform>
        <id>Q08893-2</id>
        <name>2</name>
        <name>E75B</name>
        <sequence type="described" ref="VSP_003653"/>
    </isoform>
    <text>Additional isoforms seem to exist. Isoforms differ in their N-termini.</text>
</comment>
<comment type="miscellaneous">
    <molecule>Isoform 2</molecule>
    <text evidence="4">Lacks the first zinc-finger.</text>
</comment>
<comment type="similarity">
    <text evidence="4">Belongs to the nuclear hormone receptor family. NR1 subfamily.</text>
</comment>
<evidence type="ECO:0000255" key="1">
    <source>
        <dbReference type="PROSITE-ProRule" id="PRU00407"/>
    </source>
</evidence>
<evidence type="ECO:0000255" key="2">
    <source>
        <dbReference type="PROSITE-ProRule" id="PRU01189"/>
    </source>
</evidence>
<evidence type="ECO:0000256" key="3">
    <source>
        <dbReference type="SAM" id="MobiDB-lite"/>
    </source>
</evidence>
<evidence type="ECO:0000305" key="4"/>
<proteinExistence type="evidence at transcript level"/>
<reference key="1">
    <citation type="journal article" date="1993" name="Insect Biochem. Mol. Biol.">
        <title>The E75 gene of Manduca sexta and comparison with its Drosophila homolog.</title>
        <authorList>
            <person name="Segraves W.A."/>
            <person name="Woldin C."/>
        </authorList>
    </citation>
    <scope>NUCLEOTIDE SEQUENCE</scope>
</reference>
<reference key="2">
    <citation type="submission" date="1996-10" db="EMBL/GenBank/DDBJ databases">
        <title>Developmental expression and hormonal regulation of the E75A and E75B homologs in the epidermis of the tobacco hornworm, Manduca sexta.</title>
        <authorList>
            <person name="Zhou B."/>
            <person name="Hiruma K."/>
            <person name="Jindra M."/>
            <person name="Shinoda T."/>
            <person name="Segraves W.A."/>
            <person name="Riddiford L.M."/>
        </authorList>
    </citation>
    <scope>NUCLEOTIDE SEQUENCE OF 1-114</scope>
</reference>
<protein>
    <recommendedName>
        <fullName>Ecdysone-inducible protein E75</fullName>
    </recommendedName>
    <alternativeName>
        <fullName>Nuclear receptor subfamily 1 group D member 3</fullName>
    </alternativeName>
</protein>
<organism>
    <name type="scientific">Manduca sexta</name>
    <name type="common">Tobacco hawkmoth</name>
    <name type="synonym">Tobacco hornworm</name>
    <dbReference type="NCBI Taxonomy" id="7130"/>
    <lineage>
        <taxon>Eukaryota</taxon>
        <taxon>Metazoa</taxon>
        <taxon>Ecdysozoa</taxon>
        <taxon>Arthropoda</taxon>
        <taxon>Hexapoda</taxon>
        <taxon>Insecta</taxon>
        <taxon>Pterygota</taxon>
        <taxon>Neoptera</taxon>
        <taxon>Endopterygota</taxon>
        <taxon>Lepidoptera</taxon>
        <taxon>Glossata</taxon>
        <taxon>Ditrysia</taxon>
        <taxon>Bombycoidea</taxon>
        <taxon>Sphingidae</taxon>
        <taxon>Sphinginae</taxon>
        <taxon>Sphingini</taxon>
        <taxon>Manduca</taxon>
    </lineage>
</organism>